<name>PSTB1_SYNJA</name>
<proteinExistence type="inferred from homology"/>
<accession>Q2JUA1</accession>
<keyword id="KW-0067">ATP-binding</keyword>
<keyword id="KW-0997">Cell inner membrane</keyword>
<keyword id="KW-1003">Cell membrane</keyword>
<keyword id="KW-0472">Membrane</keyword>
<keyword id="KW-0547">Nucleotide-binding</keyword>
<keyword id="KW-0592">Phosphate transport</keyword>
<keyword id="KW-1278">Translocase</keyword>
<keyword id="KW-0813">Transport</keyword>
<feature type="chain" id="PRO_0000272561" description="Phosphate import ATP-binding protein PstB 1">
    <location>
        <begin position="1"/>
        <end position="275"/>
    </location>
</feature>
<feature type="domain" description="ABC transporter" evidence="1">
    <location>
        <begin position="22"/>
        <end position="261"/>
    </location>
</feature>
<feature type="binding site" evidence="1">
    <location>
        <begin position="54"/>
        <end position="61"/>
    </location>
    <ligand>
        <name>ATP</name>
        <dbReference type="ChEBI" id="CHEBI:30616"/>
    </ligand>
</feature>
<evidence type="ECO:0000255" key="1">
    <source>
        <dbReference type="HAMAP-Rule" id="MF_01702"/>
    </source>
</evidence>
<organism>
    <name type="scientific">Synechococcus sp. (strain JA-3-3Ab)</name>
    <name type="common">Cyanobacteria bacterium Yellowstone A-Prime</name>
    <dbReference type="NCBI Taxonomy" id="321327"/>
    <lineage>
        <taxon>Bacteria</taxon>
        <taxon>Bacillati</taxon>
        <taxon>Cyanobacteriota</taxon>
        <taxon>Cyanophyceae</taxon>
        <taxon>Synechococcales</taxon>
        <taxon>Synechococcaceae</taxon>
        <taxon>Synechococcus</taxon>
    </lineage>
</organism>
<protein>
    <recommendedName>
        <fullName evidence="1">Phosphate import ATP-binding protein PstB 1</fullName>
        <ecNumber evidence="1">7.3.2.1</ecNumber>
    </recommendedName>
    <alternativeName>
        <fullName evidence="1">ABC phosphate transporter 1</fullName>
    </alternativeName>
    <alternativeName>
        <fullName evidence="1">Phosphate-transporting ATPase 1</fullName>
    </alternativeName>
</protein>
<dbReference type="EC" id="7.3.2.1" evidence="1"/>
<dbReference type="EMBL" id="CP000239">
    <property type="protein sequence ID" value="ABC99719.1"/>
    <property type="molecule type" value="Genomic_DNA"/>
</dbReference>
<dbReference type="RefSeq" id="WP_011430397.1">
    <property type="nucleotide sequence ID" value="NC_007775.1"/>
</dbReference>
<dbReference type="SMR" id="Q2JUA1"/>
<dbReference type="STRING" id="321327.CYA_1555"/>
<dbReference type="KEGG" id="cya:CYA_1555"/>
<dbReference type="eggNOG" id="COG1117">
    <property type="taxonomic scope" value="Bacteria"/>
</dbReference>
<dbReference type="HOGENOM" id="CLU_000604_1_22_3"/>
<dbReference type="Proteomes" id="UP000008818">
    <property type="component" value="Chromosome"/>
</dbReference>
<dbReference type="GO" id="GO:0005886">
    <property type="term" value="C:plasma membrane"/>
    <property type="evidence" value="ECO:0007669"/>
    <property type="project" value="UniProtKB-SubCell"/>
</dbReference>
<dbReference type="GO" id="GO:0005524">
    <property type="term" value="F:ATP binding"/>
    <property type="evidence" value="ECO:0007669"/>
    <property type="project" value="UniProtKB-KW"/>
</dbReference>
<dbReference type="GO" id="GO:0016887">
    <property type="term" value="F:ATP hydrolysis activity"/>
    <property type="evidence" value="ECO:0007669"/>
    <property type="project" value="InterPro"/>
</dbReference>
<dbReference type="GO" id="GO:0015415">
    <property type="term" value="F:ATPase-coupled phosphate ion transmembrane transporter activity"/>
    <property type="evidence" value="ECO:0007669"/>
    <property type="project" value="UniProtKB-EC"/>
</dbReference>
<dbReference type="GO" id="GO:0035435">
    <property type="term" value="P:phosphate ion transmembrane transport"/>
    <property type="evidence" value="ECO:0007669"/>
    <property type="project" value="InterPro"/>
</dbReference>
<dbReference type="CDD" id="cd03260">
    <property type="entry name" value="ABC_PstB_phosphate_transporter"/>
    <property type="match status" value="1"/>
</dbReference>
<dbReference type="Gene3D" id="3.40.50.300">
    <property type="entry name" value="P-loop containing nucleotide triphosphate hydrolases"/>
    <property type="match status" value="1"/>
</dbReference>
<dbReference type="InterPro" id="IPR003593">
    <property type="entry name" value="AAA+_ATPase"/>
</dbReference>
<dbReference type="InterPro" id="IPR003439">
    <property type="entry name" value="ABC_transporter-like_ATP-bd"/>
</dbReference>
<dbReference type="InterPro" id="IPR017871">
    <property type="entry name" value="ABC_transporter-like_CS"/>
</dbReference>
<dbReference type="InterPro" id="IPR027417">
    <property type="entry name" value="P-loop_NTPase"/>
</dbReference>
<dbReference type="InterPro" id="IPR005670">
    <property type="entry name" value="PstB-like"/>
</dbReference>
<dbReference type="NCBIfam" id="TIGR00972">
    <property type="entry name" value="3a0107s01c2"/>
    <property type="match status" value="1"/>
</dbReference>
<dbReference type="PANTHER" id="PTHR43423">
    <property type="entry name" value="ABC TRANSPORTER I FAMILY MEMBER 17"/>
    <property type="match status" value="1"/>
</dbReference>
<dbReference type="PANTHER" id="PTHR43423:SF1">
    <property type="entry name" value="ABC TRANSPORTER I FAMILY MEMBER 17"/>
    <property type="match status" value="1"/>
</dbReference>
<dbReference type="Pfam" id="PF00005">
    <property type="entry name" value="ABC_tran"/>
    <property type="match status" value="1"/>
</dbReference>
<dbReference type="SMART" id="SM00382">
    <property type="entry name" value="AAA"/>
    <property type="match status" value="1"/>
</dbReference>
<dbReference type="SUPFAM" id="SSF52540">
    <property type="entry name" value="P-loop containing nucleoside triphosphate hydrolases"/>
    <property type="match status" value="1"/>
</dbReference>
<dbReference type="PROSITE" id="PS00211">
    <property type="entry name" value="ABC_TRANSPORTER_1"/>
    <property type="match status" value="1"/>
</dbReference>
<dbReference type="PROSITE" id="PS50893">
    <property type="entry name" value="ABC_TRANSPORTER_2"/>
    <property type="match status" value="1"/>
</dbReference>
<dbReference type="PROSITE" id="PS51238">
    <property type="entry name" value="PSTB"/>
    <property type="match status" value="1"/>
</dbReference>
<comment type="function">
    <text evidence="1">Part of the ABC transporter complex PstSACB involved in phosphate import. Responsible for energy coupling to the transport system.</text>
</comment>
<comment type="catalytic activity">
    <reaction evidence="1">
        <text>phosphate(out) + ATP + H2O = ADP + 2 phosphate(in) + H(+)</text>
        <dbReference type="Rhea" id="RHEA:24440"/>
        <dbReference type="ChEBI" id="CHEBI:15377"/>
        <dbReference type="ChEBI" id="CHEBI:15378"/>
        <dbReference type="ChEBI" id="CHEBI:30616"/>
        <dbReference type="ChEBI" id="CHEBI:43474"/>
        <dbReference type="ChEBI" id="CHEBI:456216"/>
        <dbReference type="EC" id="7.3.2.1"/>
    </reaction>
</comment>
<comment type="subunit">
    <text evidence="1">The complex is composed of two ATP-binding proteins (PstB), two transmembrane proteins (PstC and PstA) and a solute-binding protein (PstS).</text>
</comment>
<comment type="subcellular location">
    <subcellularLocation>
        <location evidence="1">Cell inner membrane</location>
        <topology evidence="1">Peripheral membrane protein</topology>
    </subcellularLocation>
</comment>
<comment type="similarity">
    <text evidence="1">Belongs to the ABC transporter superfamily. Phosphate importer (TC 3.A.1.7) family.</text>
</comment>
<reference key="1">
    <citation type="journal article" date="2007" name="ISME J.">
        <title>Population level functional diversity in a microbial community revealed by comparative genomic and metagenomic analyses.</title>
        <authorList>
            <person name="Bhaya D."/>
            <person name="Grossman A.R."/>
            <person name="Steunou A.-S."/>
            <person name="Khuri N."/>
            <person name="Cohan F.M."/>
            <person name="Hamamura N."/>
            <person name="Melendrez M.C."/>
            <person name="Bateson M.M."/>
            <person name="Ward D.M."/>
            <person name="Heidelberg J.F."/>
        </authorList>
    </citation>
    <scope>NUCLEOTIDE SEQUENCE [LARGE SCALE GENOMIC DNA]</scope>
    <source>
        <strain>JA-3-3Ab</strain>
    </source>
</reference>
<gene>
    <name evidence="1" type="primary">pstB1</name>
    <name type="synonym">pstB-1</name>
    <name type="ordered locus">CYA_1555</name>
</gene>
<sequence length="275" mass="31139">MRSPLSDKSGSPEQSTRLEVEIETRDLSVYYGSHLAVKQVSLKIPKNHITAFIGPSGCGKSTILRCFNRMNDLIPGARVEGSVIFHGKNIYDPDVDPSEVRRRVGLVFQKPNPFPKSIYDNIAFGPRINGYQGDLDELVERALRQAVLWDEVKDKLRMSALSLSGGQQQRLCIARTLAIQPEVILMDEPCASLDPISTLRIEELLKELGRRYTIIIVTHNMQQAARVSDFTAFFNTELDERGIRYGRMVEFDRTEKIFNSPANRETEEYVSGRFG</sequence>